<organism>
    <name type="scientific">Chlorobium limicola (strain DSM 245 / NBRC 103803 / 6330)</name>
    <dbReference type="NCBI Taxonomy" id="290315"/>
    <lineage>
        <taxon>Bacteria</taxon>
        <taxon>Pseudomonadati</taxon>
        <taxon>Chlorobiota</taxon>
        <taxon>Chlorobiia</taxon>
        <taxon>Chlorobiales</taxon>
        <taxon>Chlorobiaceae</taxon>
        <taxon>Chlorobium/Pelodictyon group</taxon>
        <taxon>Chlorobium</taxon>
    </lineage>
</organism>
<accession>B3EFW0</accession>
<protein>
    <recommendedName>
        <fullName evidence="1">Putative cysteine ligase BshC</fullName>
        <ecNumber evidence="1">6.-.-.-</ecNumber>
    </recommendedName>
</protein>
<comment type="similarity">
    <text evidence="1">Belongs to the BshC family.</text>
</comment>
<feature type="chain" id="PRO_0000378227" description="Putative cysteine ligase BshC">
    <location>
        <begin position="1"/>
        <end position="563"/>
    </location>
</feature>
<dbReference type="EC" id="6.-.-.-" evidence="1"/>
<dbReference type="EMBL" id="CP001097">
    <property type="protein sequence ID" value="ACD89493.1"/>
    <property type="molecule type" value="Genomic_DNA"/>
</dbReference>
<dbReference type="RefSeq" id="WP_012465374.1">
    <property type="nucleotide sequence ID" value="NC_010803.1"/>
</dbReference>
<dbReference type="SMR" id="B3EFW0"/>
<dbReference type="STRING" id="290315.Clim_0400"/>
<dbReference type="KEGG" id="cli:Clim_0400"/>
<dbReference type="eggNOG" id="COG4365">
    <property type="taxonomic scope" value="Bacteria"/>
</dbReference>
<dbReference type="HOGENOM" id="CLU_022249_1_0_10"/>
<dbReference type="OrthoDB" id="9765151at2"/>
<dbReference type="Proteomes" id="UP000008841">
    <property type="component" value="Chromosome"/>
</dbReference>
<dbReference type="GO" id="GO:0016874">
    <property type="term" value="F:ligase activity"/>
    <property type="evidence" value="ECO:0007669"/>
    <property type="project" value="UniProtKB-UniRule"/>
</dbReference>
<dbReference type="HAMAP" id="MF_01867">
    <property type="entry name" value="BshC"/>
    <property type="match status" value="1"/>
</dbReference>
<dbReference type="InterPro" id="IPR011199">
    <property type="entry name" value="Bacillithiol_biosynth_BshC"/>
</dbReference>
<dbReference type="InterPro" id="IPR055399">
    <property type="entry name" value="CC_BshC"/>
</dbReference>
<dbReference type="InterPro" id="IPR055398">
    <property type="entry name" value="Rossmann-like_BshC"/>
</dbReference>
<dbReference type="NCBIfam" id="TIGR03998">
    <property type="entry name" value="thiol_BshC"/>
    <property type="match status" value="1"/>
</dbReference>
<dbReference type="Pfam" id="PF24850">
    <property type="entry name" value="CC_BshC"/>
    <property type="match status" value="1"/>
</dbReference>
<dbReference type="Pfam" id="PF10079">
    <property type="entry name" value="Rossmann-like_BshC"/>
    <property type="match status" value="1"/>
</dbReference>
<dbReference type="PIRSF" id="PIRSF012535">
    <property type="entry name" value="UCP012535"/>
    <property type="match status" value="1"/>
</dbReference>
<keyword id="KW-0436">Ligase</keyword>
<proteinExistence type="inferred from homology"/>
<sequence length="563" mass="64761">MNTFLLDYHAILTPKKGFPALFKDYTSEGEARNRLISGCFHLDYLNESDYYRQLRQLESRPFDRELLATILRRQNTRYGCTELHLREIEKLRSPRCMTIVTGQQPGLFTGPLYTIYKALTAVVFAERQKTLFPEYDFVPLFWLEGEDHDYEESAHTAVFSAGGIMHFRPEPFRRMPDQMVAATCFGEDIRRIVADFLDQLQETGNKPLIASMLGDCCFPGNTLEMSFAQLMMHLFKNQPIVLLSSQDPDFKKLSRPVFLRELSTCPASSYNIIAQSSTLENLGYSAQSKPRAVNLFHINHHGQRQKIEYPEDNRFVITPDNIHLSRHQILELCQDHPERFSPNVALRPIVQDTLLPSFACIAGPGEISYLAQFRRNYEQFGLTMPFVIPRGSFTLVEPKFSRFMDKMLRISGKSGFSRKQIYHAFFSDLQTLKRNAERVGENPELDSLFFSIRDRIEKALKDLGPVLAKIDPTLEPMLAASTLQAMKTVDTIEQKARKAGRRKNEELIEQILKTETAFFPEGVPQERLINVFYYLNKYGMELIDTLKNLLAGHSTEAHLIVEL</sequence>
<reference key="1">
    <citation type="submission" date="2008-05" db="EMBL/GenBank/DDBJ databases">
        <title>Complete sequence of Chlorobium limicola DSM 245.</title>
        <authorList>
            <consortium name="US DOE Joint Genome Institute"/>
            <person name="Lucas S."/>
            <person name="Copeland A."/>
            <person name="Lapidus A."/>
            <person name="Glavina del Rio T."/>
            <person name="Dalin E."/>
            <person name="Tice H."/>
            <person name="Bruce D."/>
            <person name="Goodwin L."/>
            <person name="Pitluck S."/>
            <person name="Schmutz J."/>
            <person name="Larimer F."/>
            <person name="Land M."/>
            <person name="Hauser L."/>
            <person name="Kyrpides N."/>
            <person name="Ovchinnikova G."/>
            <person name="Zhao F."/>
            <person name="Li T."/>
            <person name="Liu Z."/>
            <person name="Overmann J."/>
            <person name="Bryant D.A."/>
            <person name="Richardson P."/>
        </authorList>
    </citation>
    <scope>NUCLEOTIDE SEQUENCE [LARGE SCALE GENOMIC DNA]</scope>
    <source>
        <strain>DSM 245 / NBRC 103803 / 6330</strain>
    </source>
</reference>
<name>BSHC_CHLL2</name>
<evidence type="ECO:0000255" key="1">
    <source>
        <dbReference type="HAMAP-Rule" id="MF_01867"/>
    </source>
</evidence>
<gene>
    <name evidence="1" type="primary">bshC</name>
    <name type="ordered locus">Clim_0400</name>
</gene>